<evidence type="ECO:0000255" key="1">
    <source>
        <dbReference type="HAMAP-Rule" id="MF_00184"/>
    </source>
</evidence>
<evidence type="ECO:0000255" key="2">
    <source>
        <dbReference type="PROSITE-ProRule" id="PRU01228"/>
    </source>
</evidence>
<gene>
    <name evidence="1" type="primary">thrS</name>
    <name type="ordered locus">NT01EI_1886</name>
</gene>
<feature type="chain" id="PRO_1000203904" description="Threonine--tRNA ligase">
    <location>
        <begin position="1"/>
        <end position="642"/>
    </location>
</feature>
<feature type="domain" description="TGS" evidence="2">
    <location>
        <begin position="1"/>
        <end position="61"/>
    </location>
</feature>
<feature type="region of interest" description="Catalytic" evidence="1">
    <location>
        <begin position="243"/>
        <end position="534"/>
    </location>
</feature>
<feature type="binding site" evidence="1">
    <location>
        <position position="334"/>
    </location>
    <ligand>
        <name>Zn(2+)</name>
        <dbReference type="ChEBI" id="CHEBI:29105"/>
    </ligand>
</feature>
<feature type="binding site" evidence="1">
    <location>
        <position position="385"/>
    </location>
    <ligand>
        <name>Zn(2+)</name>
        <dbReference type="ChEBI" id="CHEBI:29105"/>
    </ligand>
</feature>
<feature type="binding site" evidence="1">
    <location>
        <position position="511"/>
    </location>
    <ligand>
        <name>Zn(2+)</name>
        <dbReference type="ChEBI" id="CHEBI:29105"/>
    </ligand>
</feature>
<comment type="function">
    <text evidence="1">Catalyzes the attachment of threonine to tRNA(Thr) in a two-step reaction: L-threonine is first activated by ATP to form Thr-AMP and then transferred to the acceptor end of tRNA(Thr). Also edits incorrectly charged L-seryl-tRNA(Thr).</text>
</comment>
<comment type="catalytic activity">
    <reaction evidence="1">
        <text>tRNA(Thr) + L-threonine + ATP = L-threonyl-tRNA(Thr) + AMP + diphosphate + H(+)</text>
        <dbReference type="Rhea" id="RHEA:24624"/>
        <dbReference type="Rhea" id="RHEA-COMP:9670"/>
        <dbReference type="Rhea" id="RHEA-COMP:9704"/>
        <dbReference type="ChEBI" id="CHEBI:15378"/>
        <dbReference type="ChEBI" id="CHEBI:30616"/>
        <dbReference type="ChEBI" id="CHEBI:33019"/>
        <dbReference type="ChEBI" id="CHEBI:57926"/>
        <dbReference type="ChEBI" id="CHEBI:78442"/>
        <dbReference type="ChEBI" id="CHEBI:78534"/>
        <dbReference type="ChEBI" id="CHEBI:456215"/>
        <dbReference type="EC" id="6.1.1.3"/>
    </reaction>
</comment>
<comment type="cofactor">
    <cofactor evidence="1">
        <name>Zn(2+)</name>
        <dbReference type="ChEBI" id="CHEBI:29105"/>
    </cofactor>
    <text evidence="1">Binds 1 zinc ion per subunit.</text>
</comment>
<comment type="subunit">
    <text evidence="1">Homodimer.</text>
</comment>
<comment type="subcellular location">
    <subcellularLocation>
        <location evidence="1">Cytoplasm</location>
    </subcellularLocation>
</comment>
<comment type="similarity">
    <text evidence="1">Belongs to the class-II aminoacyl-tRNA synthetase family.</text>
</comment>
<name>SYT_EDWI9</name>
<sequence>MPVITLPDGSQRHFDHPVSVMDIARDIGPGLAKACIAGRVNGELVDACDLIDADATVAIITAKDQEGVDILRHSCAHLLGHAIKQLWPQTKMAIGPVIDNGFYYDVDLDHTLTQEDLERLDKRMHELAEKDYDVIKKKVSWQEARDAFVARDELYKVAILDENISHDDRPGLYHHEEYLDMCRGPHVPNMRFCHHFKLQKSSGAYWRGDSDNKMLQRIYGTAWADKKQLNAYLQRLEEAAKRDHRKIGKQLDLYHMQEEAPGMVFWHNDGWTIFRELEAFVRMKLKEYQYQEVKGPFMMDRVLWEKTGHWENYKDAMFTTSSENREYCIKPMNCPGHVQIFNQGLKSYRDLPLRMAEFGSCHRNEPSGSLHGLMRVRGFTQDDAHIFCTEEQIRDEVNSCIKMVYDMYSTFGFEKIVVKLSTRPEKRIGSDEIWDRAEEDLAAALQENGIPFEYQPGEGAFYGPKIEFTLHDCLDRAWQCGTVQLDFSLPGRLSASYVGENNERVVPVMIHRAILGSMERFIGILTEEFAGFFPTWLAPVQAVVMNITDSQAEYVEELSKKLQAAGIRVKSDLRNEKIGFKIREHTLRRVPYMLVCGDKEVEAGKVAVRTRRGKDLGVMSIDDVIKKLQQEIRSRSLHQLEE</sequence>
<dbReference type="EC" id="6.1.1.3" evidence="1"/>
<dbReference type="EMBL" id="CP001600">
    <property type="protein sequence ID" value="ACR69062.1"/>
    <property type="molecule type" value="Genomic_DNA"/>
</dbReference>
<dbReference type="RefSeq" id="WP_015871207.1">
    <property type="nucleotide sequence ID" value="NZ_CP169062.1"/>
</dbReference>
<dbReference type="SMR" id="C5B846"/>
<dbReference type="STRING" id="67780.B6E78_02460"/>
<dbReference type="GeneID" id="69538831"/>
<dbReference type="KEGG" id="eic:NT01EI_1886"/>
<dbReference type="PATRIC" id="fig|634503.3.peg.1689"/>
<dbReference type="HOGENOM" id="CLU_008554_0_1_6"/>
<dbReference type="OrthoDB" id="9802304at2"/>
<dbReference type="Proteomes" id="UP000001485">
    <property type="component" value="Chromosome"/>
</dbReference>
<dbReference type="GO" id="GO:0005829">
    <property type="term" value="C:cytosol"/>
    <property type="evidence" value="ECO:0007669"/>
    <property type="project" value="TreeGrafter"/>
</dbReference>
<dbReference type="GO" id="GO:0005524">
    <property type="term" value="F:ATP binding"/>
    <property type="evidence" value="ECO:0007669"/>
    <property type="project" value="UniProtKB-UniRule"/>
</dbReference>
<dbReference type="GO" id="GO:0046872">
    <property type="term" value="F:metal ion binding"/>
    <property type="evidence" value="ECO:0007669"/>
    <property type="project" value="UniProtKB-KW"/>
</dbReference>
<dbReference type="GO" id="GO:0004829">
    <property type="term" value="F:threonine-tRNA ligase activity"/>
    <property type="evidence" value="ECO:0007669"/>
    <property type="project" value="UniProtKB-UniRule"/>
</dbReference>
<dbReference type="GO" id="GO:0000049">
    <property type="term" value="F:tRNA binding"/>
    <property type="evidence" value="ECO:0007669"/>
    <property type="project" value="UniProtKB-KW"/>
</dbReference>
<dbReference type="GO" id="GO:0006435">
    <property type="term" value="P:threonyl-tRNA aminoacylation"/>
    <property type="evidence" value="ECO:0007669"/>
    <property type="project" value="UniProtKB-UniRule"/>
</dbReference>
<dbReference type="CDD" id="cd01667">
    <property type="entry name" value="TGS_ThrRS"/>
    <property type="match status" value="1"/>
</dbReference>
<dbReference type="CDD" id="cd00860">
    <property type="entry name" value="ThrRS_anticodon"/>
    <property type="match status" value="1"/>
</dbReference>
<dbReference type="CDD" id="cd00771">
    <property type="entry name" value="ThrRS_core"/>
    <property type="match status" value="1"/>
</dbReference>
<dbReference type="FunFam" id="3.10.20.30:FF:000005">
    <property type="entry name" value="Threonine--tRNA ligase"/>
    <property type="match status" value="1"/>
</dbReference>
<dbReference type="FunFam" id="3.30.54.20:FF:000002">
    <property type="entry name" value="Threonine--tRNA ligase"/>
    <property type="match status" value="1"/>
</dbReference>
<dbReference type="FunFam" id="3.30.930.10:FF:000002">
    <property type="entry name" value="Threonine--tRNA ligase"/>
    <property type="match status" value="1"/>
</dbReference>
<dbReference type="FunFam" id="3.40.50.800:FF:000001">
    <property type="entry name" value="Threonine--tRNA ligase"/>
    <property type="match status" value="1"/>
</dbReference>
<dbReference type="FunFam" id="3.30.980.10:FF:000005">
    <property type="entry name" value="Threonyl-tRNA synthetase, mitochondrial"/>
    <property type="match status" value="1"/>
</dbReference>
<dbReference type="Gene3D" id="3.10.20.30">
    <property type="match status" value="1"/>
</dbReference>
<dbReference type="Gene3D" id="3.30.54.20">
    <property type="match status" value="1"/>
</dbReference>
<dbReference type="Gene3D" id="3.40.50.800">
    <property type="entry name" value="Anticodon-binding domain"/>
    <property type="match status" value="1"/>
</dbReference>
<dbReference type="Gene3D" id="3.30.930.10">
    <property type="entry name" value="Bira Bifunctional Protein, Domain 2"/>
    <property type="match status" value="1"/>
</dbReference>
<dbReference type="Gene3D" id="3.30.980.10">
    <property type="entry name" value="Threonyl-trna Synthetase, Chain A, domain 2"/>
    <property type="match status" value="1"/>
</dbReference>
<dbReference type="HAMAP" id="MF_00184">
    <property type="entry name" value="Thr_tRNA_synth"/>
    <property type="match status" value="1"/>
</dbReference>
<dbReference type="InterPro" id="IPR002314">
    <property type="entry name" value="aa-tRNA-synt_IIb"/>
</dbReference>
<dbReference type="InterPro" id="IPR006195">
    <property type="entry name" value="aa-tRNA-synth_II"/>
</dbReference>
<dbReference type="InterPro" id="IPR045864">
    <property type="entry name" value="aa-tRNA-synth_II/BPL/LPL"/>
</dbReference>
<dbReference type="InterPro" id="IPR004154">
    <property type="entry name" value="Anticodon-bd"/>
</dbReference>
<dbReference type="InterPro" id="IPR036621">
    <property type="entry name" value="Anticodon-bd_dom_sf"/>
</dbReference>
<dbReference type="InterPro" id="IPR012675">
    <property type="entry name" value="Beta-grasp_dom_sf"/>
</dbReference>
<dbReference type="InterPro" id="IPR004095">
    <property type="entry name" value="TGS"/>
</dbReference>
<dbReference type="InterPro" id="IPR012676">
    <property type="entry name" value="TGS-like"/>
</dbReference>
<dbReference type="InterPro" id="IPR002320">
    <property type="entry name" value="Thr-tRNA-ligase_IIa"/>
</dbReference>
<dbReference type="InterPro" id="IPR018163">
    <property type="entry name" value="Thr/Ala-tRNA-synth_IIc_edit"/>
</dbReference>
<dbReference type="InterPro" id="IPR047246">
    <property type="entry name" value="ThrRS_anticodon"/>
</dbReference>
<dbReference type="InterPro" id="IPR033728">
    <property type="entry name" value="ThrRS_core"/>
</dbReference>
<dbReference type="InterPro" id="IPR012947">
    <property type="entry name" value="tRNA_SAD"/>
</dbReference>
<dbReference type="NCBIfam" id="TIGR00418">
    <property type="entry name" value="thrS"/>
    <property type="match status" value="1"/>
</dbReference>
<dbReference type="PANTHER" id="PTHR11451:SF44">
    <property type="entry name" value="THREONINE--TRNA LIGASE, CHLOROPLASTIC_MITOCHONDRIAL 2"/>
    <property type="match status" value="1"/>
</dbReference>
<dbReference type="PANTHER" id="PTHR11451">
    <property type="entry name" value="THREONINE-TRNA LIGASE"/>
    <property type="match status" value="1"/>
</dbReference>
<dbReference type="Pfam" id="PF03129">
    <property type="entry name" value="HGTP_anticodon"/>
    <property type="match status" value="1"/>
</dbReference>
<dbReference type="Pfam" id="PF02824">
    <property type="entry name" value="TGS"/>
    <property type="match status" value="1"/>
</dbReference>
<dbReference type="Pfam" id="PF00587">
    <property type="entry name" value="tRNA-synt_2b"/>
    <property type="match status" value="1"/>
</dbReference>
<dbReference type="Pfam" id="PF07973">
    <property type="entry name" value="tRNA_SAD"/>
    <property type="match status" value="1"/>
</dbReference>
<dbReference type="PRINTS" id="PR01047">
    <property type="entry name" value="TRNASYNTHTHR"/>
</dbReference>
<dbReference type="SMART" id="SM00863">
    <property type="entry name" value="tRNA_SAD"/>
    <property type="match status" value="1"/>
</dbReference>
<dbReference type="SUPFAM" id="SSF52954">
    <property type="entry name" value="Class II aaRS ABD-related"/>
    <property type="match status" value="1"/>
</dbReference>
<dbReference type="SUPFAM" id="SSF55681">
    <property type="entry name" value="Class II aaRS and biotin synthetases"/>
    <property type="match status" value="1"/>
</dbReference>
<dbReference type="SUPFAM" id="SSF81271">
    <property type="entry name" value="TGS-like"/>
    <property type="match status" value="1"/>
</dbReference>
<dbReference type="SUPFAM" id="SSF55186">
    <property type="entry name" value="ThrRS/AlaRS common domain"/>
    <property type="match status" value="1"/>
</dbReference>
<dbReference type="PROSITE" id="PS50862">
    <property type="entry name" value="AA_TRNA_LIGASE_II"/>
    <property type="match status" value="1"/>
</dbReference>
<dbReference type="PROSITE" id="PS51880">
    <property type="entry name" value="TGS"/>
    <property type="match status" value="1"/>
</dbReference>
<proteinExistence type="inferred from homology"/>
<organism>
    <name type="scientific">Edwardsiella ictaluri (strain 93-146)</name>
    <dbReference type="NCBI Taxonomy" id="634503"/>
    <lineage>
        <taxon>Bacteria</taxon>
        <taxon>Pseudomonadati</taxon>
        <taxon>Pseudomonadota</taxon>
        <taxon>Gammaproteobacteria</taxon>
        <taxon>Enterobacterales</taxon>
        <taxon>Hafniaceae</taxon>
        <taxon>Edwardsiella</taxon>
    </lineage>
</organism>
<accession>C5B846</accession>
<keyword id="KW-0030">Aminoacyl-tRNA synthetase</keyword>
<keyword id="KW-0067">ATP-binding</keyword>
<keyword id="KW-0963">Cytoplasm</keyword>
<keyword id="KW-0436">Ligase</keyword>
<keyword id="KW-0479">Metal-binding</keyword>
<keyword id="KW-0547">Nucleotide-binding</keyword>
<keyword id="KW-0648">Protein biosynthesis</keyword>
<keyword id="KW-0694">RNA-binding</keyword>
<keyword id="KW-0820">tRNA-binding</keyword>
<keyword id="KW-0862">Zinc</keyword>
<protein>
    <recommendedName>
        <fullName evidence="1">Threonine--tRNA ligase</fullName>
        <ecNumber evidence="1">6.1.1.3</ecNumber>
    </recommendedName>
    <alternativeName>
        <fullName evidence="1">Threonyl-tRNA synthetase</fullName>
        <shortName evidence="1">ThrRS</shortName>
    </alternativeName>
</protein>
<reference key="1">
    <citation type="submission" date="2009-03" db="EMBL/GenBank/DDBJ databases">
        <title>Complete genome sequence of Edwardsiella ictaluri 93-146.</title>
        <authorList>
            <person name="Williams M.L."/>
            <person name="Gillaspy A.F."/>
            <person name="Dyer D.W."/>
            <person name="Thune R.L."/>
            <person name="Waldbieser G.C."/>
            <person name="Schuster S.C."/>
            <person name="Gipson J."/>
            <person name="Zaitshik J."/>
            <person name="Landry C."/>
            <person name="Lawrence M.L."/>
        </authorList>
    </citation>
    <scope>NUCLEOTIDE SEQUENCE [LARGE SCALE GENOMIC DNA]</scope>
    <source>
        <strain>93-146</strain>
    </source>
</reference>